<proteinExistence type="inferred from homology"/>
<feature type="chain" id="PRO_1000051097" description="Small ribosomal subunit protein uS19">
    <location>
        <begin position="1"/>
        <end position="92"/>
    </location>
</feature>
<reference key="1">
    <citation type="journal article" date="2007" name="PLoS Genet.">
        <title>Patterns and implications of gene gain and loss in the evolution of Prochlorococcus.</title>
        <authorList>
            <person name="Kettler G.C."/>
            <person name="Martiny A.C."/>
            <person name="Huang K."/>
            <person name="Zucker J."/>
            <person name="Coleman M.L."/>
            <person name="Rodrigue S."/>
            <person name="Chen F."/>
            <person name="Lapidus A."/>
            <person name="Ferriera S."/>
            <person name="Johnson J."/>
            <person name="Steglich C."/>
            <person name="Church G.M."/>
            <person name="Richardson P."/>
            <person name="Chisholm S.W."/>
        </authorList>
    </citation>
    <scope>NUCLEOTIDE SEQUENCE [LARGE SCALE GENOMIC DNA]</scope>
    <source>
        <strain>MIT 9301</strain>
    </source>
</reference>
<accession>A3PF43</accession>
<comment type="function">
    <text evidence="1">Protein S19 forms a complex with S13 that binds strongly to the 16S ribosomal RNA.</text>
</comment>
<comment type="similarity">
    <text evidence="1">Belongs to the universal ribosomal protein uS19 family.</text>
</comment>
<gene>
    <name evidence="1" type="primary">rpsS</name>
    <name evidence="1" type="synonym">rps19</name>
    <name type="ordered locus">P9301_17451</name>
</gene>
<name>RS19_PROM0</name>
<dbReference type="EMBL" id="CP000576">
    <property type="protein sequence ID" value="ABO18368.1"/>
    <property type="molecule type" value="Genomic_DNA"/>
</dbReference>
<dbReference type="RefSeq" id="WP_011819167.1">
    <property type="nucleotide sequence ID" value="NC_009091.1"/>
</dbReference>
<dbReference type="SMR" id="A3PF43"/>
<dbReference type="STRING" id="167546.P9301_17451"/>
<dbReference type="KEGG" id="pmg:P9301_17451"/>
<dbReference type="eggNOG" id="COG0185">
    <property type="taxonomic scope" value="Bacteria"/>
</dbReference>
<dbReference type="HOGENOM" id="CLU_144911_0_1_3"/>
<dbReference type="OrthoDB" id="9797833at2"/>
<dbReference type="Proteomes" id="UP000001430">
    <property type="component" value="Chromosome"/>
</dbReference>
<dbReference type="GO" id="GO:0005737">
    <property type="term" value="C:cytoplasm"/>
    <property type="evidence" value="ECO:0007669"/>
    <property type="project" value="UniProtKB-ARBA"/>
</dbReference>
<dbReference type="GO" id="GO:0015935">
    <property type="term" value="C:small ribosomal subunit"/>
    <property type="evidence" value="ECO:0007669"/>
    <property type="project" value="InterPro"/>
</dbReference>
<dbReference type="GO" id="GO:0019843">
    <property type="term" value="F:rRNA binding"/>
    <property type="evidence" value="ECO:0007669"/>
    <property type="project" value="UniProtKB-UniRule"/>
</dbReference>
<dbReference type="GO" id="GO:0003735">
    <property type="term" value="F:structural constituent of ribosome"/>
    <property type="evidence" value="ECO:0007669"/>
    <property type="project" value="InterPro"/>
</dbReference>
<dbReference type="GO" id="GO:0000028">
    <property type="term" value="P:ribosomal small subunit assembly"/>
    <property type="evidence" value="ECO:0007669"/>
    <property type="project" value="TreeGrafter"/>
</dbReference>
<dbReference type="GO" id="GO:0006412">
    <property type="term" value="P:translation"/>
    <property type="evidence" value="ECO:0007669"/>
    <property type="project" value="UniProtKB-UniRule"/>
</dbReference>
<dbReference type="FunFam" id="3.30.860.10:FF:000001">
    <property type="entry name" value="30S ribosomal protein S19"/>
    <property type="match status" value="1"/>
</dbReference>
<dbReference type="Gene3D" id="3.30.860.10">
    <property type="entry name" value="30s Ribosomal Protein S19, Chain A"/>
    <property type="match status" value="1"/>
</dbReference>
<dbReference type="HAMAP" id="MF_00531">
    <property type="entry name" value="Ribosomal_uS19"/>
    <property type="match status" value="1"/>
</dbReference>
<dbReference type="InterPro" id="IPR002222">
    <property type="entry name" value="Ribosomal_uS19"/>
</dbReference>
<dbReference type="InterPro" id="IPR005732">
    <property type="entry name" value="Ribosomal_uS19_bac-type"/>
</dbReference>
<dbReference type="InterPro" id="IPR020934">
    <property type="entry name" value="Ribosomal_uS19_CS"/>
</dbReference>
<dbReference type="InterPro" id="IPR023575">
    <property type="entry name" value="Ribosomal_uS19_SF"/>
</dbReference>
<dbReference type="NCBIfam" id="TIGR01050">
    <property type="entry name" value="rpsS_bact"/>
    <property type="match status" value="1"/>
</dbReference>
<dbReference type="PANTHER" id="PTHR11880">
    <property type="entry name" value="RIBOSOMAL PROTEIN S19P FAMILY MEMBER"/>
    <property type="match status" value="1"/>
</dbReference>
<dbReference type="PANTHER" id="PTHR11880:SF8">
    <property type="entry name" value="SMALL RIBOSOMAL SUBUNIT PROTEIN US19M"/>
    <property type="match status" value="1"/>
</dbReference>
<dbReference type="Pfam" id="PF00203">
    <property type="entry name" value="Ribosomal_S19"/>
    <property type="match status" value="1"/>
</dbReference>
<dbReference type="PIRSF" id="PIRSF002144">
    <property type="entry name" value="Ribosomal_S19"/>
    <property type="match status" value="1"/>
</dbReference>
<dbReference type="PRINTS" id="PR00975">
    <property type="entry name" value="RIBOSOMALS19"/>
</dbReference>
<dbReference type="SUPFAM" id="SSF54570">
    <property type="entry name" value="Ribosomal protein S19"/>
    <property type="match status" value="1"/>
</dbReference>
<dbReference type="PROSITE" id="PS00323">
    <property type="entry name" value="RIBOSOMAL_S19"/>
    <property type="match status" value="1"/>
</dbReference>
<keyword id="KW-1185">Reference proteome</keyword>
<keyword id="KW-0687">Ribonucleoprotein</keyword>
<keyword id="KW-0689">Ribosomal protein</keyword>
<keyword id="KW-0694">RNA-binding</keyword>
<keyword id="KW-0699">rRNA-binding</keyword>
<sequence length="92" mass="10295">MGRSLKKGPFIADSLLKKVEKQNTDNDKSVIKTWSRSSTILPLMIGHTIAVHNGKTHIPVFITEQMIGHKLGEFAPTRTYRGHIRDKKGAKS</sequence>
<evidence type="ECO:0000255" key="1">
    <source>
        <dbReference type="HAMAP-Rule" id="MF_00531"/>
    </source>
</evidence>
<evidence type="ECO:0000305" key="2"/>
<protein>
    <recommendedName>
        <fullName evidence="1">Small ribosomal subunit protein uS19</fullName>
    </recommendedName>
    <alternativeName>
        <fullName evidence="2">30S ribosomal protein S19</fullName>
    </alternativeName>
</protein>
<organism>
    <name type="scientific">Prochlorococcus marinus (strain MIT 9301)</name>
    <dbReference type="NCBI Taxonomy" id="167546"/>
    <lineage>
        <taxon>Bacteria</taxon>
        <taxon>Bacillati</taxon>
        <taxon>Cyanobacteriota</taxon>
        <taxon>Cyanophyceae</taxon>
        <taxon>Synechococcales</taxon>
        <taxon>Prochlorococcaceae</taxon>
        <taxon>Prochlorococcus</taxon>
    </lineage>
</organism>